<feature type="chain" id="PRO_1000083517" description="UPF0301 protein YqgE">
    <location>
        <begin position="1"/>
        <end position="187"/>
    </location>
</feature>
<proteinExistence type="inferred from homology"/>
<evidence type="ECO:0000255" key="1">
    <source>
        <dbReference type="HAMAP-Rule" id="MF_00758"/>
    </source>
</evidence>
<dbReference type="EMBL" id="CP000886">
    <property type="protein sequence ID" value="ABX69192.1"/>
    <property type="molecule type" value="Genomic_DNA"/>
</dbReference>
<dbReference type="RefSeq" id="WP_001053166.1">
    <property type="nucleotide sequence ID" value="NC_010102.1"/>
</dbReference>
<dbReference type="SMR" id="A9N4P2"/>
<dbReference type="KEGG" id="spq:SPAB_03861"/>
<dbReference type="PATRIC" id="fig|1016998.12.peg.3638"/>
<dbReference type="HOGENOM" id="CLU_057596_1_0_6"/>
<dbReference type="BioCyc" id="SENT1016998:SPAB_RS15690-MONOMER"/>
<dbReference type="Proteomes" id="UP000008556">
    <property type="component" value="Chromosome"/>
</dbReference>
<dbReference type="GO" id="GO:0005829">
    <property type="term" value="C:cytosol"/>
    <property type="evidence" value="ECO:0007669"/>
    <property type="project" value="TreeGrafter"/>
</dbReference>
<dbReference type="FunFam" id="3.30.70.1300:FF:000001">
    <property type="entry name" value="UPF0301 protein YqgE"/>
    <property type="match status" value="1"/>
</dbReference>
<dbReference type="Gene3D" id="3.40.1740.10">
    <property type="entry name" value="VC0467-like"/>
    <property type="match status" value="1"/>
</dbReference>
<dbReference type="Gene3D" id="3.30.70.1300">
    <property type="entry name" value="VC0467-like domains"/>
    <property type="match status" value="1"/>
</dbReference>
<dbReference type="HAMAP" id="MF_00758">
    <property type="entry name" value="UPF0301"/>
    <property type="match status" value="1"/>
</dbReference>
<dbReference type="InterPro" id="IPR003774">
    <property type="entry name" value="AlgH-like"/>
</dbReference>
<dbReference type="NCBIfam" id="NF001266">
    <property type="entry name" value="PRK00228.1-1"/>
    <property type="match status" value="1"/>
</dbReference>
<dbReference type="PANTHER" id="PTHR30327">
    <property type="entry name" value="UNCHARACTERIZED PROTEIN YQGE"/>
    <property type="match status" value="1"/>
</dbReference>
<dbReference type="PANTHER" id="PTHR30327:SF1">
    <property type="entry name" value="UPF0301 PROTEIN YQGE"/>
    <property type="match status" value="1"/>
</dbReference>
<dbReference type="Pfam" id="PF02622">
    <property type="entry name" value="DUF179"/>
    <property type="match status" value="1"/>
</dbReference>
<dbReference type="SUPFAM" id="SSF143456">
    <property type="entry name" value="VC0467-like"/>
    <property type="match status" value="1"/>
</dbReference>
<comment type="similarity">
    <text evidence="1">Belongs to the UPF0301 (AlgH) family.</text>
</comment>
<accession>A9N4P2</accession>
<name>YQGE_SALPB</name>
<sequence>MNLQHHFLIAMPALQDPIFRRSVVYICEHNQDGAMGIIINKPLENLQIEGILEKLKITPEPRDSAIRLDKAVMLGGPLAEDRGFILHTPPSRFASSIRISDNTVITTSRDVLETLGTQQQPSDVLVALGYASWDKGQLEQELLDNAWLTAPADLNILFKTPIAERWREAAKLFGIDILTMPGVAGHA</sequence>
<gene>
    <name evidence="1" type="primary">yqgE</name>
    <name type="ordered locus">SPAB_03861</name>
</gene>
<protein>
    <recommendedName>
        <fullName evidence="1">UPF0301 protein YqgE</fullName>
    </recommendedName>
</protein>
<reference key="1">
    <citation type="submission" date="2007-11" db="EMBL/GenBank/DDBJ databases">
        <authorList>
            <consortium name="The Salmonella enterica serovar Paratyphi B Genome Sequencing Project"/>
            <person name="McClelland M."/>
            <person name="Sanderson E.K."/>
            <person name="Porwollik S."/>
            <person name="Spieth J."/>
            <person name="Clifton W.S."/>
            <person name="Fulton R."/>
            <person name="Cordes M."/>
            <person name="Wollam A."/>
            <person name="Shah N."/>
            <person name="Pepin K."/>
            <person name="Bhonagiri V."/>
            <person name="Nash W."/>
            <person name="Johnson M."/>
            <person name="Thiruvilangam P."/>
            <person name="Wilson R."/>
        </authorList>
    </citation>
    <scope>NUCLEOTIDE SEQUENCE [LARGE SCALE GENOMIC DNA]</scope>
    <source>
        <strain>ATCC BAA-1250 / SPB7</strain>
    </source>
</reference>
<organism>
    <name type="scientific">Salmonella paratyphi B (strain ATCC BAA-1250 / SPB7)</name>
    <dbReference type="NCBI Taxonomy" id="1016998"/>
    <lineage>
        <taxon>Bacteria</taxon>
        <taxon>Pseudomonadati</taxon>
        <taxon>Pseudomonadota</taxon>
        <taxon>Gammaproteobacteria</taxon>
        <taxon>Enterobacterales</taxon>
        <taxon>Enterobacteriaceae</taxon>
        <taxon>Salmonella</taxon>
    </lineage>
</organism>